<organism>
    <name type="scientific">Mycobacterium bovis (strain ATCC BAA-935 / AF2122/97)</name>
    <dbReference type="NCBI Taxonomy" id="233413"/>
    <lineage>
        <taxon>Bacteria</taxon>
        <taxon>Bacillati</taxon>
        <taxon>Actinomycetota</taxon>
        <taxon>Actinomycetes</taxon>
        <taxon>Mycobacteriales</taxon>
        <taxon>Mycobacteriaceae</taxon>
        <taxon>Mycobacterium</taxon>
        <taxon>Mycobacterium tuberculosis complex</taxon>
    </lineage>
</organism>
<dbReference type="EC" id="2.4.1.15" evidence="2"/>
<dbReference type="EC" id="2.4.1.347" evidence="2"/>
<dbReference type="EMBL" id="LT708304">
    <property type="protein sequence ID" value="SIU02147.1"/>
    <property type="molecule type" value="Genomic_DNA"/>
</dbReference>
<dbReference type="RefSeq" id="NP_857159.1">
    <property type="nucleotide sequence ID" value="NC_002945.3"/>
</dbReference>
<dbReference type="RefSeq" id="WP_003418951.1">
    <property type="nucleotide sequence ID" value="NC_002945.4"/>
</dbReference>
<dbReference type="SMR" id="Q7TWE1"/>
<dbReference type="GeneID" id="45427476"/>
<dbReference type="KEGG" id="mbo:BQ2027_MB3520"/>
<dbReference type="PATRIC" id="fig|233413.5.peg.3859"/>
<dbReference type="UniPathway" id="UPA00299"/>
<dbReference type="Proteomes" id="UP000001419">
    <property type="component" value="Chromosome"/>
</dbReference>
<dbReference type="GO" id="GO:0005829">
    <property type="term" value="C:cytosol"/>
    <property type="evidence" value="ECO:0007669"/>
    <property type="project" value="TreeGrafter"/>
</dbReference>
<dbReference type="GO" id="GO:0047260">
    <property type="term" value="F:alpha,alpha-trehalose-phosphate synthase (GDP-forming) activity"/>
    <property type="evidence" value="ECO:0007669"/>
    <property type="project" value="RHEA"/>
</dbReference>
<dbReference type="GO" id="GO:0003825">
    <property type="term" value="F:alpha,alpha-trehalose-phosphate synthase (UDP-forming) activity"/>
    <property type="evidence" value="ECO:0007669"/>
    <property type="project" value="UniProtKB-EC"/>
</dbReference>
<dbReference type="GO" id="GO:0004805">
    <property type="term" value="F:trehalose-phosphatase activity"/>
    <property type="evidence" value="ECO:0007669"/>
    <property type="project" value="TreeGrafter"/>
</dbReference>
<dbReference type="GO" id="GO:0005992">
    <property type="term" value="P:trehalose biosynthetic process"/>
    <property type="evidence" value="ECO:0007669"/>
    <property type="project" value="UniProtKB-UniPathway"/>
</dbReference>
<dbReference type="CDD" id="cd03788">
    <property type="entry name" value="GT20_TPS"/>
    <property type="match status" value="1"/>
</dbReference>
<dbReference type="FunFam" id="3.40.50.2000:FF:000102">
    <property type="entry name" value="Trehalose-6-phosphate synthase"/>
    <property type="match status" value="1"/>
</dbReference>
<dbReference type="FunFam" id="3.40.50.2000:FF:000262">
    <property type="entry name" value="Trehalose-6-phosphate synthase"/>
    <property type="match status" value="1"/>
</dbReference>
<dbReference type="Gene3D" id="3.40.50.2000">
    <property type="entry name" value="Glycogen Phosphorylase B"/>
    <property type="match status" value="2"/>
</dbReference>
<dbReference type="InterPro" id="IPR001830">
    <property type="entry name" value="Glyco_trans_20"/>
</dbReference>
<dbReference type="PANTHER" id="PTHR10788:SF106">
    <property type="entry name" value="BCDNA.GH08860"/>
    <property type="match status" value="1"/>
</dbReference>
<dbReference type="PANTHER" id="PTHR10788">
    <property type="entry name" value="TREHALOSE-6-PHOSPHATE SYNTHASE"/>
    <property type="match status" value="1"/>
</dbReference>
<dbReference type="Pfam" id="PF00982">
    <property type="entry name" value="Glyco_transf_20"/>
    <property type="match status" value="1"/>
</dbReference>
<dbReference type="SUPFAM" id="SSF53756">
    <property type="entry name" value="UDP-Glycosyltransferase/glycogen phosphorylase"/>
    <property type="match status" value="1"/>
</dbReference>
<accession>Q7TWE1</accession>
<accession>A0A1R3Y4A1</accession>
<accession>X2BP60</accession>
<proteinExistence type="inferred from homology"/>
<gene>
    <name evidence="2" type="primary">otsA</name>
    <name type="ordered locus">BQ2027_MB3520</name>
</gene>
<comment type="function">
    <text evidence="2">Probably involved in the osmoprotection via the biosynthesis of trehalose and in the production of glycogen and alpha-glucan via the TreS-Pep2 branch involved in the biosynthesis of maltose-1-phosphate (M1P). Catalyzes the transfer of glucose from UDP-glucose (UDP-Glc) to D-glucose 6-phosphate (Glc-6-P) to form trehalose-6-phosphate. Probably also able to use ADP-Glc, CDP-Glc, GDP-Glc and TDP-Glc as glucosyl donors.</text>
</comment>
<comment type="catalytic activity">
    <reaction evidence="2">
        <text>ADP-alpha-D-glucose + D-glucose 6-phosphate = alpha,alpha-trehalose 6-phosphate + ADP + H(+)</text>
        <dbReference type="Rhea" id="RHEA:53880"/>
        <dbReference type="ChEBI" id="CHEBI:15378"/>
        <dbReference type="ChEBI" id="CHEBI:57498"/>
        <dbReference type="ChEBI" id="CHEBI:58429"/>
        <dbReference type="ChEBI" id="CHEBI:61548"/>
        <dbReference type="ChEBI" id="CHEBI:456216"/>
        <dbReference type="EC" id="2.4.1.347"/>
    </reaction>
</comment>
<comment type="catalytic activity">
    <reaction evidence="2">
        <text>CDP-alpha-D-glucose + D-glucose 6-phosphate = alpha,alpha-trehalose 6-phosphate + CDP + H(+)</text>
        <dbReference type="Rhea" id="RHEA:53884"/>
        <dbReference type="ChEBI" id="CHEBI:15378"/>
        <dbReference type="ChEBI" id="CHEBI:58069"/>
        <dbReference type="ChEBI" id="CHEBI:58429"/>
        <dbReference type="ChEBI" id="CHEBI:61548"/>
        <dbReference type="ChEBI" id="CHEBI:137927"/>
    </reaction>
</comment>
<comment type="catalytic activity">
    <reaction evidence="2">
        <text>GDP-alpha-D-glucose + D-glucose 6-phosphate = alpha,alpha-trehalose 6-phosphate + GDP + H(+)</text>
        <dbReference type="Rhea" id="RHEA:14605"/>
        <dbReference type="ChEBI" id="CHEBI:15378"/>
        <dbReference type="ChEBI" id="CHEBI:58189"/>
        <dbReference type="ChEBI" id="CHEBI:58429"/>
        <dbReference type="ChEBI" id="CHEBI:61548"/>
        <dbReference type="ChEBI" id="CHEBI:62230"/>
    </reaction>
</comment>
<comment type="catalytic activity">
    <reaction evidence="2">
        <text>TDP-alpha-D-glucose + D-glucose 6-phosphate = 5-methyl-UDP + alpha,alpha-trehalose 6-phosphate + H(+)</text>
        <dbReference type="Rhea" id="RHEA:53888"/>
        <dbReference type="ChEBI" id="CHEBI:15378"/>
        <dbReference type="ChEBI" id="CHEBI:58429"/>
        <dbReference type="ChEBI" id="CHEBI:61417"/>
        <dbReference type="ChEBI" id="CHEBI:61548"/>
        <dbReference type="ChEBI" id="CHEBI:137931"/>
    </reaction>
</comment>
<comment type="catalytic activity">
    <reaction evidence="2">
        <text>D-glucose 6-phosphate + UDP-alpha-D-glucose = alpha,alpha-trehalose 6-phosphate + UDP + H(+)</text>
        <dbReference type="Rhea" id="RHEA:18889"/>
        <dbReference type="ChEBI" id="CHEBI:15378"/>
        <dbReference type="ChEBI" id="CHEBI:58223"/>
        <dbReference type="ChEBI" id="CHEBI:58429"/>
        <dbReference type="ChEBI" id="CHEBI:58885"/>
        <dbReference type="ChEBI" id="CHEBI:61548"/>
        <dbReference type="EC" id="2.4.1.15"/>
    </reaction>
</comment>
<comment type="pathway">
    <text evidence="2">Glycan biosynthesis; trehalose biosynthesis.</text>
</comment>
<comment type="subunit">
    <text evidence="2">Homotetramer.</text>
</comment>
<comment type="similarity">
    <text evidence="2">Belongs to the glycosyltransferase 20 family.</text>
</comment>
<protein>
    <recommendedName>
        <fullName evidence="2">Trehalose-6-phosphate synthase</fullName>
        <shortName evidence="2">TPS</shortName>
        <ecNumber evidence="2">2.4.1.15</ecNumber>
        <ecNumber evidence="2">2.4.1.347</ecNumber>
    </recommendedName>
    <alternativeName>
        <fullName evidence="2">Alpha,alpha-trehalose-phosphate synthase [UDP-forming]</fullName>
    </alternativeName>
    <alternativeName>
        <fullName evidence="1">Osmoregulatory trehalose synthesis protein A</fullName>
        <shortName evidence="1">OtsA</shortName>
    </alternativeName>
</protein>
<feature type="chain" id="PRO_0000348904" description="Trehalose-6-phosphate synthase">
    <location>
        <begin position="1"/>
        <end position="500"/>
    </location>
</feature>
<feature type="binding site" evidence="1">
    <location>
        <position position="28"/>
    </location>
    <ligand>
        <name>D-glucose 6-phosphate</name>
        <dbReference type="ChEBI" id="CHEBI:61548"/>
    </ligand>
</feature>
<feature type="binding site" evidence="1">
    <location>
        <begin position="48"/>
        <end position="49"/>
    </location>
    <ligand>
        <name>UDP-alpha-D-glucose</name>
        <dbReference type="ChEBI" id="CHEBI:58885"/>
    </ligand>
</feature>
<feature type="binding site" evidence="1">
    <location>
        <position position="108"/>
    </location>
    <ligand>
        <name>D-glucose 6-phosphate</name>
        <dbReference type="ChEBI" id="CHEBI:61548"/>
    </ligand>
</feature>
<feature type="binding site" evidence="1">
    <location>
        <position position="162"/>
    </location>
    <ligand>
        <name>D-glucose 6-phosphate</name>
        <dbReference type="ChEBI" id="CHEBI:61548"/>
    </ligand>
</feature>
<feature type="binding site" evidence="1">
    <location>
        <position position="304"/>
    </location>
    <ligand>
        <name>UDP-alpha-D-glucose</name>
        <dbReference type="ChEBI" id="CHEBI:58885"/>
    </ligand>
</feature>
<feature type="binding site" evidence="1">
    <location>
        <position position="309"/>
    </location>
    <ligand>
        <name>UDP-alpha-D-glucose</name>
        <dbReference type="ChEBI" id="CHEBI:58885"/>
    </ligand>
</feature>
<feature type="binding site" evidence="1">
    <location>
        <position position="342"/>
    </location>
    <ligand>
        <name>D-glucose 6-phosphate</name>
        <dbReference type="ChEBI" id="CHEBI:61548"/>
    </ligand>
</feature>
<feature type="binding site" evidence="1">
    <location>
        <begin position="407"/>
        <end position="411"/>
    </location>
    <ligand>
        <name>UDP-alpha-D-glucose</name>
        <dbReference type="ChEBI" id="CHEBI:58885"/>
    </ligand>
</feature>
<feature type="site" description="Involved in alpha anomer selectivity" evidence="1">
    <location>
        <position position="117"/>
    </location>
</feature>
<feature type="site" description="Involved in alpha anomer selectivity" evidence="1">
    <location>
        <position position="187"/>
    </location>
</feature>
<keyword id="KW-0328">Glycosyltransferase</keyword>
<keyword id="KW-1185">Reference proteome</keyword>
<keyword id="KW-0808">Transferase</keyword>
<name>OTSA_MYCBO</name>
<sequence length="500" mass="55877">MAPSGGQEAQICDSETFGDSDFVVVANRLPVDLERLPDGSTTWKRSPGGLVTALEPVLRRRRGAWVGWPGVNDDGAEPDLHVLDGPIIQDELELHPVRLSTTDIAQYYEGFSNATLWPLYHDVIVKPLYHREWWDRYVDVNQRFAEAASRAAAHGATVWVQDYQLQLVPKMLRMLRPDLTIGFFLHIPFPPVELFMQMPWRTEIIQGLLGADLVGFHLPGGAQNFLILSRRLVGTDTSRGTVGVRSRFGAAVLGSRTIRVGAFPISVDSGALDHAARDRNIRRRAREIRTELGNPRKILLGVDRLDYTKGIDVRLKAFSELLAEGRVKRDDTVLVQLATPSRERVESYQTLRNDIERQVGHINGEYGEVGHPVVHYLHRPAPRDELIAFFVASDVMLVTPLRDGMNLVAKEYVACRSDLGGALVLSEFTGAAAELRHAYLVNPHDLEGVKDGIEEALNQTEEAGRRRMRSLRRQVLAHDVDRWAQSFLDALAGAHPRGQG</sequence>
<evidence type="ECO:0000250" key="1">
    <source>
        <dbReference type="UniProtKB" id="P31677"/>
    </source>
</evidence>
<evidence type="ECO:0000250" key="2">
    <source>
        <dbReference type="UniProtKB" id="P9WN11"/>
    </source>
</evidence>
<reference key="1">
    <citation type="journal article" date="2003" name="Proc. Natl. Acad. Sci. U.S.A.">
        <title>The complete genome sequence of Mycobacterium bovis.</title>
        <authorList>
            <person name="Garnier T."/>
            <person name="Eiglmeier K."/>
            <person name="Camus J.-C."/>
            <person name="Medina N."/>
            <person name="Mansoor H."/>
            <person name="Pryor M."/>
            <person name="Duthoy S."/>
            <person name="Grondin S."/>
            <person name="Lacroix C."/>
            <person name="Monsempe C."/>
            <person name="Simon S."/>
            <person name="Harris B."/>
            <person name="Atkin R."/>
            <person name="Doggett J."/>
            <person name="Mayes R."/>
            <person name="Keating L."/>
            <person name="Wheeler P.R."/>
            <person name="Parkhill J."/>
            <person name="Barrell B.G."/>
            <person name="Cole S.T."/>
            <person name="Gordon S.V."/>
            <person name="Hewinson R.G."/>
        </authorList>
    </citation>
    <scope>NUCLEOTIDE SEQUENCE [LARGE SCALE GENOMIC DNA]</scope>
    <source>
        <strain>ATCC BAA-935 / AF2122/97</strain>
    </source>
</reference>
<reference key="2">
    <citation type="journal article" date="2017" name="Genome Announc.">
        <title>Updated reference genome sequence and annotation of Mycobacterium bovis AF2122/97.</title>
        <authorList>
            <person name="Malone K.M."/>
            <person name="Farrell D."/>
            <person name="Stuber T.P."/>
            <person name="Schubert O.T."/>
            <person name="Aebersold R."/>
            <person name="Robbe-Austerman S."/>
            <person name="Gordon S.V."/>
        </authorList>
    </citation>
    <scope>NUCLEOTIDE SEQUENCE [LARGE SCALE GENOMIC DNA]</scope>
    <scope>GENOME REANNOTATION</scope>
    <source>
        <strain>ATCC BAA-935 / AF2122/97</strain>
    </source>
</reference>